<reference key="1">
    <citation type="journal article" date="2003" name="Proc. Natl. Acad. Sci. U.S.A.">
        <title>Complete genome sequence of Lactobacillus plantarum WCFS1.</title>
        <authorList>
            <person name="Kleerebezem M."/>
            <person name="Boekhorst J."/>
            <person name="van Kranenburg R."/>
            <person name="Molenaar D."/>
            <person name="Kuipers O.P."/>
            <person name="Leer R."/>
            <person name="Tarchini R."/>
            <person name="Peters S.A."/>
            <person name="Sandbrink H.M."/>
            <person name="Fiers M.W.E.J."/>
            <person name="Stiekema W."/>
            <person name="Klein Lankhorst R.M."/>
            <person name="Bron P.A."/>
            <person name="Hoffer S.M."/>
            <person name="Nierop Groot M.N."/>
            <person name="Kerkhoven R."/>
            <person name="De Vries M."/>
            <person name="Ursing B."/>
            <person name="De Vos W.M."/>
            <person name="Siezen R.J."/>
        </authorList>
    </citation>
    <scope>NUCLEOTIDE SEQUENCE [LARGE SCALE GENOMIC DNA]</scope>
    <source>
        <strain>ATCC BAA-793 / NCIMB 8826 / WCFS1</strain>
    </source>
</reference>
<reference key="2">
    <citation type="journal article" date="2012" name="J. Bacteriol.">
        <title>Complete resequencing and reannotation of the Lactobacillus plantarum WCFS1 genome.</title>
        <authorList>
            <person name="Siezen R.J."/>
            <person name="Francke C."/>
            <person name="Renckens B."/>
            <person name="Boekhorst J."/>
            <person name="Wels M."/>
            <person name="Kleerebezem M."/>
            <person name="van Hijum S.A."/>
        </authorList>
    </citation>
    <scope>NUCLEOTIDE SEQUENCE [LARGE SCALE GENOMIC DNA]</scope>
    <scope>GENOME REANNOTATION</scope>
    <source>
        <strain>ATCC BAA-793 / NCIMB 8826 / WCFS1</strain>
    </source>
</reference>
<accession>Q88V16</accession>
<accession>F9UQJ0</accession>
<keyword id="KW-0067">ATP-binding</keyword>
<keyword id="KW-0238">DNA-binding</keyword>
<keyword id="KW-0255">Endonuclease</keyword>
<keyword id="KW-0378">Hydrolase</keyword>
<keyword id="KW-0540">Nuclease</keyword>
<keyword id="KW-0547">Nucleotide-binding</keyword>
<keyword id="KW-1185">Reference proteome</keyword>
<keyword id="KW-0694">RNA-binding</keyword>
<keyword id="KW-0699">rRNA-binding</keyword>
<proteinExistence type="inferred from homology"/>
<organism>
    <name type="scientific">Lactiplantibacillus plantarum (strain ATCC BAA-793 / NCIMB 8826 / WCFS1)</name>
    <name type="common">Lactobacillus plantarum</name>
    <dbReference type="NCBI Taxonomy" id="220668"/>
    <lineage>
        <taxon>Bacteria</taxon>
        <taxon>Bacillati</taxon>
        <taxon>Bacillota</taxon>
        <taxon>Bacilli</taxon>
        <taxon>Lactobacillales</taxon>
        <taxon>Lactobacillaceae</taxon>
        <taxon>Lactiplantibacillus</taxon>
    </lineage>
</organism>
<gene>
    <name evidence="1" type="primary">mutS2</name>
    <name evidence="1" type="synonym">rqcU</name>
    <name type="ordered locus">lp_2271</name>
</gene>
<evidence type="ECO:0000255" key="1">
    <source>
        <dbReference type="HAMAP-Rule" id="MF_00092"/>
    </source>
</evidence>
<comment type="function">
    <text evidence="1">Endonuclease that is involved in the suppression of homologous recombination and thus may have a key role in the control of bacterial genetic diversity.</text>
</comment>
<comment type="function">
    <text evidence="1">Acts as a ribosome collision sensor, splitting the ribosome into its 2 subunits. Detects stalled/collided 70S ribosomes which it binds and splits by an ATP-hydrolysis driven conformational change. Acts upstream of the ribosome quality control system (RQC), a ribosome-associated complex that mediates the extraction of incompletely synthesized nascent chains from stalled ribosomes and their subsequent degradation. Probably generates substrates for RQC.</text>
</comment>
<comment type="subunit">
    <text evidence="1">Homodimer. Binds to stalled ribosomes, contacting rRNA.</text>
</comment>
<comment type="similarity">
    <text evidence="1">Belongs to the DNA mismatch repair MutS family. MutS2 subfamily.</text>
</comment>
<dbReference type="EC" id="3.1.-.-" evidence="1"/>
<dbReference type="EC" id="3.6.4.-" evidence="1"/>
<dbReference type="EMBL" id="AL935263">
    <property type="protein sequence ID" value="CCC79479.1"/>
    <property type="molecule type" value="Genomic_DNA"/>
</dbReference>
<dbReference type="RefSeq" id="WP_011101700.1">
    <property type="nucleotide sequence ID" value="NC_004567.2"/>
</dbReference>
<dbReference type="RefSeq" id="YP_004889993.1">
    <property type="nucleotide sequence ID" value="NC_004567.2"/>
</dbReference>
<dbReference type="SMR" id="Q88V16"/>
<dbReference type="STRING" id="220668.lp_2271"/>
<dbReference type="DNASU" id="1061270"/>
<dbReference type="EnsemblBacteria" id="CCC79479">
    <property type="protein sequence ID" value="CCC79479"/>
    <property type="gene ID" value="lp_2271"/>
</dbReference>
<dbReference type="KEGG" id="lpl:lp_2271"/>
<dbReference type="PATRIC" id="fig|220668.9.peg.1922"/>
<dbReference type="eggNOG" id="COG1193">
    <property type="taxonomic scope" value="Bacteria"/>
</dbReference>
<dbReference type="HOGENOM" id="CLU_011252_2_1_9"/>
<dbReference type="OrthoDB" id="9808166at2"/>
<dbReference type="PhylomeDB" id="Q88V16"/>
<dbReference type="Proteomes" id="UP000000432">
    <property type="component" value="Chromosome"/>
</dbReference>
<dbReference type="GO" id="GO:0005524">
    <property type="term" value="F:ATP binding"/>
    <property type="evidence" value="ECO:0007669"/>
    <property type="project" value="UniProtKB-UniRule"/>
</dbReference>
<dbReference type="GO" id="GO:0016887">
    <property type="term" value="F:ATP hydrolysis activity"/>
    <property type="evidence" value="ECO:0007669"/>
    <property type="project" value="InterPro"/>
</dbReference>
<dbReference type="GO" id="GO:0140664">
    <property type="term" value="F:ATP-dependent DNA damage sensor activity"/>
    <property type="evidence" value="ECO:0007669"/>
    <property type="project" value="InterPro"/>
</dbReference>
<dbReference type="GO" id="GO:0004519">
    <property type="term" value="F:endonuclease activity"/>
    <property type="evidence" value="ECO:0007669"/>
    <property type="project" value="UniProtKB-UniRule"/>
</dbReference>
<dbReference type="GO" id="GO:0030983">
    <property type="term" value="F:mismatched DNA binding"/>
    <property type="evidence" value="ECO:0007669"/>
    <property type="project" value="InterPro"/>
</dbReference>
<dbReference type="GO" id="GO:0043023">
    <property type="term" value="F:ribosomal large subunit binding"/>
    <property type="evidence" value="ECO:0007669"/>
    <property type="project" value="UniProtKB-UniRule"/>
</dbReference>
<dbReference type="GO" id="GO:0019843">
    <property type="term" value="F:rRNA binding"/>
    <property type="evidence" value="ECO:0007669"/>
    <property type="project" value="UniProtKB-UniRule"/>
</dbReference>
<dbReference type="GO" id="GO:0006298">
    <property type="term" value="P:mismatch repair"/>
    <property type="evidence" value="ECO:0007669"/>
    <property type="project" value="InterPro"/>
</dbReference>
<dbReference type="GO" id="GO:0045910">
    <property type="term" value="P:negative regulation of DNA recombination"/>
    <property type="evidence" value="ECO:0007669"/>
    <property type="project" value="InterPro"/>
</dbReference>
<dbReference type="GO" id="GO:0072344">
    <property type="term" value="P:rescue of stalled ribosome"/>
    <property type="evidence" value="ECO:0007669"/>
    <property type="project" value="UniProtKB-UniRule"/>
</dbReference>
<dbReference type="FunFam" id="3.40.50.300:FF:000830">
    <property type="entry name" value="Endonuclease MutS2"/>
    <property type="match status" value="1"/>
</dbReference>
<dbReference type="Gene3D" id="1.10.1420.10">
    <property type="match status" value="2"/>
</dbReference>
<dbReference type="Gene3D" id="3.30.1370.110">
    <property type="match status" value="1"/>
</dbReference>
<dbReference type="Gene3D" id="3.40.50.300">
    <property type="entry name" value="P-loop containing nucleotide triphosphate hydrolases"/>
    <property type="match status" value="1"/>
</dbReference>
<dbReference type="HAMAP" id="MF_00092">
    <property type="entry name" value="MutS2"/>
    <property type="match status" value="1"/>
</dbReference>
<dbReference type="InterPro" id="IPR000432">
    <property type="entry name" value="DNA_mismatch_repair_MutS_C"/>
</dbReference>
<dbReference type="InterPro" id="IPR007696">
    <property type="entry name" value="DNA_mismatch_repair_MutS_core"/>
</dbReference>
<dbReference type="InterPro" id="IPR036187">
    <property type="entry name" value="DNA_mismatch_repair_MutS_sf"/>
</dbReference>
<dbReference type="InterPro" id="IPR046893">
    <property type="entry name" value="MSSS"/>
</dbReference>
<dbReference type="InterPro" id="IPR045076">
    <property type="entry name" value="MutS"/>
</dbReference>
<dbReference type="InterPro" id="IPR005747">
    <property type="entry name" value="MutS2"/>
</dbReference>
<dbReference type="InterPro" id="IPR027417">
    <property type="entry name" value="P-loop_NTPase"/>
</dbReference>
<dbReference type="InterPro" id="IPR002625">
    <property type="entry name" value="Smr_dom"/>
</dbReference>
<dbReference type="InterPro" id="IPR036063">
    <property type="entry name" value="Smr_dom_sf"/>
</dbReference>
<dbReference type="NCBIfam" id="TIGR01069">
    <property type="entry name" value="mutS2"/>
    <property type="match status" value="1"/>
</dbReference>
<dbReference type="PANTHER" id="PTHR48466:SF2">
    <property type="entry name" value="OS10G0509000 PROTEIN"/>
    <property type="match status" value="1"/>
</dbReference>
<dbReference type="PANTHER" id="PTHR48466">
    <property type="entry name" value="OS10G0509000 PROTEIN-RELATED"/>
    <property type="match status" value="1"/>
</dbReference>
<dbReference type="Pfam" id="PF20297">
    <property type="entry name" value="MSSS"/>
    <property type="match status" value="1"/>
</dbReference>
<dbReference type="Pfam" id="PF00488">
    <property type="entry name" value="MutS_V"/>
    <property type="match status" value="1"/>
</dbReference>
<dbReference type="Pfam" id="PF01713">
    <property type="entry name" value="Smr"/>
    <property type="match status" value="1"/>
</dbReference>
<dbReference type="PIRSF" id="PIRSF005814">
    <property type="entry name" value="MutS_YshD"/>
    <property type="match status" value="1"/>
</dbReference>
<dbReference type="SMART" id="SM00534">
    <property type="entry name" value="MUTSac"/>
    <property type="match status" value="1"/>
</dbReference>
<dbReference type="SMART" id="SM00533">
    <property type="entry name" value="MUTSd"/>
    <property type="match status" value="1"/>
</dbReference>
<dbReference type="SMART" id="SM00463">
    <property type="entry name" value="SMR"/>
    <property type="match status" value="1"/>
</dbReference>
<dbReference type="SUPFAM" id="SSF48334">
    <property type="entry name" value="DNA repair protein MutS, domain III"/>
    <property type="match status" value="1"/>
</dbReference>
<dbReference type="SUPFAM" id="SSF52540">
    <property type="entry name" value="P-loop containing nucleoside triphosphate hydrolases"/>
    <property type="match status" value="1"/>
</dbReference>
<dbReference type="SUPFAM" id="SSF160443">
    <property type="entry name" value="SMR domain-like"/>
    <property type="match status" value="1"/>
</dbReference>
<dbReference type="PROSITE" id="PS00486">
    <property type="entry name" value="DNA_MISMATCH_REPAIR_2"/>
    <property type="match status" value="1"/>
</dbReference>
<dbReference type="PROSITE" id="PS50828">
    <property type="entry name" value="SMR"/>
    <property type="match status" value="1"/>
</dbReference>
<name>MUTS2_LACPL</name>
<sequence length="787" mass="87220">MNSKVLNTLEYQQVKQQLAPYLVSATGQQALNELHPMTSVADIQRALDETNDGAEVYRLKGGIPVARLADIKPHMKRLAIGATLNGSELGQVGRVLRTTRAITRFFAELLEDAPENDIRHLFDEVAELVTLPDVTKRLATAIEGDGHITDEASPELSRIRSNIRRTETEIRNQMGHYTRGHDAKYLSDPIITIRNDRYVIPVKAENRSRFGGIVHDQSASGQTLFIEPQAVMAMNDRLRQNQVAEKQEEQRILEELSNLIAPYQDEIINNAAILGHFDFINAKARYAHDMKATEPAVSPQNEVYLRQARHPLIDPRKVVANDISLGTDYQAMVITGPNTGGKTITLKTLGLLQLMAQSGLFIPVEAGSRVGVYNEIFADIGDEQSIEQNLSTFSSHMENIESFLAQIDAHSLVLVDELGAGTDPQEGAALAIAILDAIGAKGTQVVATTHYPELKAYGFNRPDTINASMEFDEETLKPTYRLLVGIPGRSNALDIAQRLGIPQAIVDQARSLTDTDSQDLNAMIADLVTKRKQVEDEQLHLKTQVADSEKLHRQLKSEFNAYQQRKDQLIEDAKVQANTIVEQSKTKADAIISDLRKKQLASGTATVKENELIDAKGALNALEQQPKLKKNRVLRRAKAQHDFHEGDDVLVKSYGQRGVLMRQMGKHEWEVQLGILKMKISDGDLERVKPEEPKRARATVQSAHASHVSPNLDLRGVRYEDAMTQVDRYIDAALLAGYPSVTIVHGKGTGALREGITNYLKSNRQVKSFHFAAPNHGGNGATEVQFK</sequence>
<protein>
    <recommendedName>
        <fullName evidence="1">Endonuclease MutS2</fullName>
        <ecNumber evidence="1">3.1.-.-</ecNumber>
    </recommendedName>
    <alternativeName>
        <fullName evidence="1">Ribosome-associated protein quality control-upstream factor</fullName>
        <shortName evidence="1">RQC-upstream factor</shortName>
        <shortName evidence="1">RqcU</shortName>
        <ecNumber evidence="1">3.6.4.-</ecNumber>
    </alternativeName>
</protein>
<feature type="chain" id="PRO_1000093370" description="Endonuclease MutS2">
    <location>
        <begin position="1"/>
        <end position="787"/>
    </location>
</feature>
<feature type="domain" description="Smr" evidence="1">
    <location>
        <begin position="712"/>
        <end position="787"/>
    </location>
</feature>
<feature type="binding site" evidence="1">
    <location>
        <begin position="336"/>
        <end position="343"/>
    </location>
    <ligand>
        <name>ATP</name>
        <dbReference type="ChEBI" id="CHEBI:30616"/>
    </ligand>
</feature>